<dbReference type="EC" id="2.4.2.18" evidence="1"/>
<dbReference type="EMBL" id="L42023">
    <property type="protein sequence ID" value="AAC23035.1"/>
    <property type="molecule type" value="Genomic_DNA"/>
</dbReference>
<dbReference type="PIR" id="E64121">
    <property type="entry name" value="E64121"/>
</dbReference>
<dbReference type="RefSeq" id="NP_439542.1">
    <property type="nucleotide sequence ID" value="NC_000907.1"/>
</dbReference>
<dbReference type="SMR" id="P43858"/>
<dbReference type="STRING" id="71421.HI_1389"/>
<dbReference type="EnsemblBacteria" id="AAC23035">
    <property type="protein sequence ID" value="AAC23035"/>
    <property type="gene ID" value="HI_1389"/>
</dbReference>
<dbReference type="KEGG" id="hin:HI_1389"/>
<dbReference type="PATRIC" id="fig|71421.8.peg.1447"/>
<dbReference type="eggNOG" id="COG0547">
    <property type="taxonomic scope" value="Bacteria"/>
</dbReference>
<dbReference type="HOGENOM" id="CLU_034315_2_1_6"/>
<dbReference type="OrthoDB" id="9806430at2"/>
<dbReference type="PhylomeDB" id="P43858"/>
<dbReference type="BioCyc" id="HINF71421:G1GJ1-1416-MONOMER"/>
<dbReference type="UniPathway" id="UPA00035">
    <property type="reaction ID" value="UER00041"/>
</dbReference>
<dbReference type="Proteomes" id="UP000000579">
    <property type="component" value="Chromosome"/>
</dbReference>
<dbReference type="GO" id="GO:0005829">
    <property type="term" value="C:cytosol"/>
    <property type="evidence" value="ECO:0000318"/>
    <property type="project" value="GO_Central"/>
</dbReference>
<dbReference type="GO" id="GO:0004048">
    <property type="term" value="F:anthranilate phosphoribosyltransferase activity"/>
    <property type="evidence" value="ECO:0007669"/>
    <property type="project" value="UniProtKB-UniRule"/>
</dbReference>
<dbReference type="GO" id="GO:0000287">
    <property type="term" value="F:magnesium ion binding"/>
    <property type="evidence" value="ECO:0007669"/>
    <property type="project" value="UniProtKB-UniRule"/>
</dbReference>
<dbReference type="GO" id="GO:0000162">
    <property type="term" value="P:L-tryptophan biosynthetic process"/>
    <property type="evidence" value="ECO:0000318"/>
    <property type="project" value="GO_Central"/>
</dbReference>
<dbReference type="FunFam" id="1.20.970.10:FF:000003">
    <property type="entry name" value="Anthranilate phosphoribosyltransferase"/>
    <property type="match status" value="1"/>
</dbReference>
<dbReference type="FunFam" id="3.40.1030.10:FF:000002">
    <property type="entry name" value="Anthranilate phosphoribosyltransferase"/>
    <property type="match status" value="1"/>
</dbReference>
<dbReference type="Gene3D" id="3.40.1030.10">
    <property type="entry name" value="Nucleoside phosphorylase/phosphoribosyltransferase catalytic domain"/>
    <property type="match status" value="1"/>
</dbReference>
<dbReference type="Gene3D" id="1.20.970.10">
    <property type="entry name" value="Transferase, Pyrimidine Nucleoside Phosphorylase, Chain C"/>
    <property type="match status" value="1"/>
</dbReference>
<dbReference type="HAMAP" id="MF_00211">
    <property type="entry name" value="TrpD"/>
    <property type="match status" value="1"/>
</dbReference>
<dbReference type="InterPro" id="IPR005940">
    <property type="entry name" value="Anthranilate_Pribosyl_Tfrase"/>
</dbReference>
<dbReference type="InterPro" id="IPR000312">
    <property type="entry name" value="Glycosyl_Trfase_fam3"/>
</dbReference>
<dbReference type="InterPro" id="IPR017459">
    <property type="entry name" value="Glycosyl_Trfase_fam3_N_dom"/>
</dbReference>
<dbReference type="InterPro" id="IPR036320">
    <property type="entry name" value="Glycosyl_Trfase_fam3_N_dom_sf"/>
</dbReference>
<dbReference type="InterPro" id="IPR035902">
    <property type="entry name" value="Nuc_phospho_transferase"/>
</dbReference>
<dbReference type="NCBIfam" id="TIGR01245">
    <property type="entry name" value="trpD"/>
    <property type="match status" value="1"/>
</dbReference>
<dbReference type="PANTHER" id="PTHR43285">
    <property type="entry name" value="ANTHRANILATE PHOSPHORIBOSYLTRANSFERASE"/>
    <property type="match status" value="1"/>
</dbReference>
<dbReference type="PANTHER" id="PTHR43285:SF2">
    <property type="entry name" value="ANTHRANILATE PHOSPHORIBOSYLTRANSFERASE"/>
    <property type="match status" value="1"/>
</dbReference>
<dbReference type="Pfam" id="PF02885">
    <property type="entry name" value="Glycos_trans_3N"/>
    <property type="match status" value="1"/>
</dbReference>
<dbReference type="Pfam" id="PF00591">
    <property type="entry name" value="Glycos_transf_3"/>
    <property type="match status" value="1"/>
</dbReference>
<dbReference type="SUPFAM" id="SSF52418">
    <property type="entry name" value="Nucleoside phosphorylase/phosphoribosyltransferase catalytic domain"/>
    <property type="match status" value="1"/>
</dbReference>
<dbReference type="SUPFAM" id="SSF47648">
    <property type="entry name" value="Nucleoside phosphorylase/phosphoribosyltransferase N-terminal domain"/>
    <property type="match status" value="1"/>
</dbReference>
<name>TRPD_HAEIN</name>
<reference key="1">
    <citation type="journal article" date="1995" name="Science">
        <title>Whole-genome random sequencing and assembly of Haemophilus influenzae Rd.</title>
        <authorList>
            <person name="Fleischmann R.D."/>
            <person name="Adams M.D."/>
            <person name="White O."/>
            <person name="Clayton R.A."/>
            <person name="Kirkness E.F."/>
            <person name="Kerlavage A.R."/>
            <person name="Bult C.J."/>
            <person name="Tomb J.-F."/>
            <person name="Dougherty B.A."/>
            <person name="Merrick J.M."/>
            <person name="McKenney K."/>
            <person name="Sutton G.G."/>
            <person name="FitzHugh W."/>
            <person name="Fields C.A."/>
            <person name="Gocayne J.D."/>
            <person name="Scott J.D."/>
            <person name="Shirley R."/>
            <person name="Liu L.-I."/>
            <person name="Glodek A."/>
            <person name="Kelley J.M."/>
            <person name="Weidman J.F."/>
            <person name="Phillips C.A."/>
            <person name="Spriggs T."/>
            <person name="Hedblom E."/>
            <person name="Cotton M.D."/>
            <person name="Utterback T.R."/>
            <person name="Hanna M.C."/>
            <person name="Nguyen D.T."/>
            <person name="Saudek D.M."/>
            <person name="Brandon R.C."/>
            <person name="Fine L.D."/>
            <person name="Fritchman J.L."/>
            <person name="Fuhrmann J.L."/>
            <person name="Geoghagen N.S.M."/>
            <person name="Gnehm C.L."/>
            <person name="McDonald L.A."/>
            <person name="Small K.V."/>
            <person name="Fraser C.M."/>
            <person name="Smith H.O."/>
            <person name="Venter J.C."/>
        </authorList>
    </citation>
    <scope>NUCLEOTIDE SEQUENCE [LARGE SCALE GENOMIC DNA]</scope>
    <source>
        <strain>ATCC 51907 / DSM 11121 / KW20 / Rd</strain>
    </source>
</reference>
<organism>
    <name type="scientific">Haemophilus influenzae (strain ATCC 51907 / DSM 11121 / KW20 / Rd)</name>
    <dbReference type="NCBI Taxonomy" id="71421"/>
    <lineage>
        <taxon>Bacteria</taxon>
        <taxon>Pseudomonadati</taxon>
        <taxon>Pseudomonadota</taxon>
        <taxon>Gammaproteobacteria</taxon>
        <taxon>Pasteurellales</taxon>
        <taxon>Pasteurellaceae</taxon>
        <taxon>Haemophilus</taxon>
    </lineage>
</organism>
<protein>
    <recommendedName>
        <fullName evidence="1">Anthranilate phosphoribosyltransferase</fullName>
        <ecNumber evidence="1">2.4.2.18</ecNumber>
    </recommendedName>
</protein>
<gene>
    <name evidence="1" type="primary">trpD</name>
    <name type="ordered locus">HI_1389</name>
</gene>
<accession>P43858</accession>
<evidence type="ECO:0000255" key="1">
    <source>
        <dbReference type="HAMAP-Rule" id="MF_00211"/>
    </source>
</evidence>
<keyword id="KW-0028">Amino-acid biosynthesis</keyword>
<keyword id="KW-0057">Aromatic amino acid biosynthesis</keyword>
<keyword id="KW-0328">Glycosyltransferase</keyword>
<keyword id="KW-0460">Magnesium</keyword>
<keyword id="KW-0479">Metal-binding</keyword>
<keyword id="KW-1185">Reference proteome</keyword>
<keyword id="KW-0808">Transferase</keyword>
<keyword id="KW-0822">Tryptophan biosynthesis</keyword>
<proteinExistence type="inferred from homology"/>
<comment type="function">
    <text evidence="1">Catalyzes the transfer of the phosphoribosyl group of 5-phosphorylribose-1-pyrophosphate (PRPP) to anthranilate to yield N-(5'-phosphoribosyl)-anthranilate (PRA).</text>
</comment>
<comment type="catalytic activity">
    <reaction evidence="1">
        <text>N-(5-phospho-beta-D-ribosyl)anthranilate + diphosphate = 5-phospho-alpha-D-ribose 1-diphosphate + anthranilate</text>
        <dbReference type="Rhea" id="RHEA:11768"/>
        <dbReference type="ChEBI" id="CHEBI:16567"/>
        <dbReference type="ChEBI" id="CHEBI:18277"/>
        <dbReference type="ChEBI" id="CHEBI:33019"/>
        <dbReference type="ChEBI" id="CHEBI:58017"/>
        <dbReference type="EC" id="2.4.2.18"/>
    </reaction>
</comment>
<comment type="cofactor">
    <cofactor evidence="1">
        <name>Mg(2+)</name>
        <dbReference type="ChEBI" id="CHEBI:18420"/>
    </cofactor>
    <text evidence="1">Binds 2 magnesium ions per monomer.</text>
</comment>
<comment type="pathway">
    <text evidence="1">Amino-acid biosynthesis; L-tryptophan biosynthesis; L-tryptophan from chorismate: step 2/5.</text>
</comment>
<comment type="subunit">
    <text evidence="1">Homodimer.</text>
</comment>
<comment type="similarity">
    <text evidence="1">Belongs to the anthranilate phosphoribosyltransferase family.</text>
</comment>
<feature type="chain" id="PRO_0000154448" description="Anthranilate phosphoribosyltransferase">
    <location>
        <begin position="1"/>
        <end position="333"/>
    </location>
</feature>
<feature type="binding site" evidence="1">
    <location>
        <position position="81"/>
    </location>
    <ligand>
        <name>5-phospho-alpha-D-ribose 1-diphosphate</name>
        <dbReference type="ChEBI" id="CHEBI:58017"/>
    </ligand>
</feature>
<feature type="binding site" evidence="1">
    <location>
        <position position="81"/>
    </location>
    <ligand>
        <name>anthranilate</name>
        <dbReference type="ChEBI" id="CHEBI:16567"/>
        <label>1</label>
    </ligand>
</feature>
<feature type="binding site" evidence="1">
    <location>
        <begin position="84"/>
        <end position="85"/>
    </location>
    <ligand>
        <name>5-phospho-alpha-D-ribose 1-diphosphate</name>
        <dbReference type="ChEBI" id="CHEBI:58017"/>
    </ligand>
</feature>
<feature type="binding site" evidence="1">
    <location>
        <position position="89"/>
    </location>
    <ligand>
        <name>5-phospho-alpha-D-ribose 1-diphosphate</name>
        <dbReference type="ChEBI" id="CHEBI:58017"/>
    </ligand>
</feature>
<feature type="binding site" evidence="1">
    <location>
        <begin position="91"/>
        <end position="94"/>
    </location>
    <ligand>
        <name>5-phospho-alpha-D-ribose 1-diphosphate</name>
        <dbReference type="ChEBI" id="CHEBI:58017"/>
    </ligand>
</feature>
<feature type="binding site" evidence="1">
    <location>
        <position position="93"/>
    </location>
    <ligand>
        <name>Mg(2+)</name>
        <dbReference type="ChEBI" id="CHEBI:18420"/>
        <label>1</label>
    </ligand>
</feature>
<feature type="binding site" evidence="1">
    <location>
        <begin position="109"/>
        <end position="117"/>
    </location>
    <ligand>
        <name>5-phospho-alpha-D-ribose 1-diphosphate</name>
        <dbReference type="ChEBI" id="CHEBI:58017"/>
    </ligand>
</feature>
<feature type="binding site" evidence="1">
    <location>
        <position position="112"/>
    </location>
    <ligand>
        <name>anthranilate</name>
        <dbReference type="ChEBI" id="CHEBI:16567"/>
        <label>1</label>
    </ligand>
</feature>
<feature type="binding site" evidence="1">
    <location>
        <position position="121"/>
    </location>
    <ligand>
        <name>5-phospho-alpha-D-ribose 1-diphosphate</name>
        <dbReference type="ChEBI" id="CHEBI:58017"/>
    </ligand>
</feature>
<feature type="binding site" evidence="1">
    <location>
        <position position="167"/>
    </location>
    <ligand>
        <name>anthranilate</name>
        <dbReference type="ChEBI" id="CHEBI:16567"/>
        <label>2</label>
    </ligand>
</feature>
<feature type="binding site" evidence="1">
    <location>
        <position position="225"/>
    </location>
    <ligand>
        <name>Mg(2+)</name>
        <dbReference type="ChEBI" id="CHEBI:18420"/>
        <label>2</label>
    </ligand>
</feature>
<feature type="binding site" evidence="1">
    <location>
        <position position="226"/>
    </location>
    <ligand>
        <name>Mg(2+)</name>
        <dbReference type="ChEBI" id="CHEBI:18420"/>
        <label>1</label>
    </ligand>
</feature>
<feature type="binding site" evidence="1">
    <location>
        <position position="226"/>
    </location>
    <ligand>
        <name>Mg(2+)</name>
        <dbReference type="ChEBI" id="CHEBI:18420"/>
        <label>2</label>
    </ligand>
</feature>
<sequence>MQHNQLLEQLYSGHSLSTSESTALFNAVIQGELSNEQIAAMLIALKVRGANTEEISGAVAASLQNAKAFPYPNYPFADIVGTGGNGQNTINISTTSAIVAASMGAKIAKHGNRSVSSKSGASDVLTALSVNVNVTPEQARQALDEIGVCFLFAQQYHSGFRHVAPVRAALKTRTIFNILGPLINPARPTYHLLGVYAPELVKTYAETAVALEHQHSFVVHGSGLDEVALHGETQVAEIKNGKIEYFTLTPEDFGLKTQSLESLRGGEPQENAQYLTALLQGKGKAEHANAVAANTALLLKLFGYDDLKQNVQNVLAHLVSGKAFETLQKLTTY</sequence>